<keyword id="KW-0009">Actin-binding</keyword>
<keyword id="KW-0877">Alternative promoter usage</keyword>
<keyword id="KW-0067">ATP-binding</keyword>
<keyword id="KW-0106">Calcium</keyword>
<keyword id="KW-0112">Calmodulin-binding</keyword>
<keyword id="KW-0966">Cell projection</keyword>
<keyword id="KW-0963">Cytoplasm</keyword>
<keyword id="KW-0206">Cytoskeleton</keyword>
<keyword id="KW-1015">Disulfide bond</keyword>
<keyword id="KW-0393">Immunoglobulin domain</keyword>
<keyword id="KW-0418">Kinase</keyword>
<keyword id="KW-0460">Magnesium</keyword>
<keyword id="KW-0479">Metal-binding</keyword>
<keyword id="KW-0547">Nucleotide-binding</keyword>
<keyword id="KW-0597">Phosphoprotein</keyword>
<keyword id="KW-1185">Reference proteome</keyword>
<keyword id="KW-0677">Repeat</keyword>
<keyword id="KW-0723">Serine/threonine-protein kinase</keyword>
<keyword id="KW-0808">Transferase</keyword>
<proteinExistence type="evidence at protein level"/>
<sequence>MDFRANLQRQVKPKTVSEEERKVHSPQQVDFRSVLAKKGTPKTPVPEKAPPPKPATPDFRSVLGSKKKLPAENGSSNAEALNVKATESPKLVGNAPLSGSLKPVANAKPAETLKPVANTKPAETLKPVANAETLKPMGNAKPAESSKPVGNTKPAETLKPVGNTKPAETLKPVGNIKPAETLKPVGNIKPAETLKPVGNTKPTETLKPVANAKSAETLKPIANTKPAETLKPVGNAKPAETLKPVGNAKPAETLKPVGNAKPAETLKPVGNAKPAETLKAVANAKPAETPKPAGKEELKKEVQNDVNCKREKAGAADNEKPPASPGTAPTFKEKLQDVRVAEGEKLLLQCQVSSEPPATITWTLNGKTLKTTKFVILSQEGSLCSVSIEKALPEDRGLYKCVAKNAAPEAECSCHVTVHDAPASENAKAPEMKSRRPKSSLPPVLGTESDATVKKKPAPKTPPKAATPPQIPQFPEDQKVRAGERVELFGKVAGTQPITCTWMKFRKQIQDSEHIKVENSEAGSKLTILAARQEHCGCYTLLVENKLGSRQAQVNLTVVDKPDPPAGTPCASDIRSSSLTLSWYGSSYDGGSAVQSYSVEIWDSVDKMWTELATCRSTSFNVRDLLPDREYKFRVRAINVYGTSEPSQESELTTVGEKPEEPKDEVEEVSDDDEKEPEVDYRTVTVNTEQKVSDFYDIEERLGSGKFGQVFRLVEKKTGKIWAGKFFKAYSAKEKENIPAEIGIMNCLHHPKLVQCVDAFEEKANIVMVLEIVSGGELFERIIDEDFELTERECIKYMRQISEGVEYIHKQGIVHLDLKPENIMCVNKTGTRIKLIDFGLARRLENAGSLKVLFGTPEFVAPEVINYEPISYATDMWSIGVICYILVSGLSPFMGDNDNETLANVTSATWDFDDEAFDEISDDAKDFISNLLKKDMKNRLDCTQCLQHPWLMKDTKNMEAKKLSKDRMKKYMARRKWQKTGNAVRAIGRLSSMAMISGLSGRKSSTGSPTSPLTAERLETEEDVSQAFLEAVAEEKPHVKPYFSKTIRDLEVVEGSAARFDCKIEGYPDPEVVWFKDDQSIRESRHFQIDYDEDGNCSLIISDVCGDDDAKYTCKAVNSLGEATCTAELIVETMEEGEGEGEEEEEE</sequence>
<reference key="1">
    <citation type="journal article" date="1991" name="J. Biol. Chem.">
        <title>Molecular characterization of a mammalian smooth muscle myosin light chain kinase.</title>
        <authorList>
            <person name="Gallagher P.J."/>
            <person name="Herring B.P."/>
            <person name="Griffin S.A."/>
            <person name="Stull J.T."/>
        </authorList>
    </citation>
    <scope>NUCLEOTIDE SEQUENCE [MRNA] (ISOFORM 1)</scope>
    <source>
        <tissue>Smooth muscle</tissue>
    </source>
</reference>
<reference key="2">
    <citation type="journal article" date="1992" name="J. Biol. Chem.">
        <authorList>
            <person name="Gallagher P.J."/>
            <person name="Herring B.P."/>
            <person name="Griffin S.Z."/>
            <person name="Stull J.T."/>
        </authorList>
    </citation>
    <scope>ERRATUM OF PUBMED:1748666</scope>
</reference>
<reference key="3">
    <citation type="journal article" date="1991" name="J. Biol. Chem.">
        <title>The carboxyl terminus of the smooth muscle myosin light chain kinase is expressed as an independent protein, telokin.</title>
        <authorList>
            <person name="Gallagher P.J."/>
            <person name="Herring B.P."/>
        </authorList>
    </citation>
    <scope>NUCLEOTIDE SEQUENCE [GENOMIC DNA / MRNA] (ISOFORM 3)</scope>
    <scope>TISSUE SPECIFICITY</scope>
    <source>
        <tissue>Smooth muscle</tissue>
    </source>
</reference>
<reference key="4">
    <citation type="journal article" date="2001" name="J. Biol. Chem.">
        <title>Differential regulation of alternatively spliced endothelial cell myosin light chain kinase isoforms by p60(Src).</title>
        <authorList>
            <person name="Birukov K.G."/>
            <person name="Csortos C."/>
            <person name="Marzilli L."/>
            <person name="Dudek S."/>
            <person name="Ma S.-F."/>
            <person name="Bresnick A.R."/>
            <person name="Verin A.D."/>
            <person name="Cotter R.J."/>
            <person name="Garcia J.G.N."/>
        </authorList>
    </citation>
    <scope>BIOPHYSICOCHEMICAL PROPERTIES</scope>
    <scope>CALMODULIN-BINDING</scope>
</reference>
<accession>P29294</accession>
<accession>Q28729</accession>
<dbReference type="EC" id="2.7.11.18"/>
<dbReference type="EMBL" id="M76233">
    <property type="protein sequence ID" value="AAA73093.1"/>
    <property type="molecule type" value="mRNA"/>
</dbReference>
<dbReference type="EMBL" id="M76234">
    <property type="protein sequence ID" value="AAA31408.1"/>
    <property type="molecule type" value="Genomic_DNA"/>
</dbReference>
<dbReference type="EMBL" id="M76181">
    <property type="protein sequence ID" value="AAA31409.1"/>
    <property type="molecule type" value="mRNA"/>
</dbReference>
<dbReference type="PIR" id="A41675">
    <property type="entry name" value="A41675"/>
</dbReference>
<dbReference type="PIR" id="A59307">
    <property type="entry name" value="A59307"/>
</dbReference>
<dbReference type="RefSeq" id="NP_001075775.1">
    <property type="nucleotide sequence ID" value="NM_001082306.1"/>
</dbReference>
<dbReference type="SMR" id="P29294"/>
<dbReference type="STRING" id="9986.ENSOCUP00000022595"/>
<dbReference type="iPTMnet" id="P29294"/>
<dbReference type="PaxDb" id="9986-ENSOCUP00000022595"/>
<dbReference type="eggNOG" id="KOG0613">
    <property type="taxonomic scope" value="Eukaryota"/>
</dbReference>
<dbReference type="InParanoid" id="P29294"/>
<dbReference type="BRENDA" id="2.7.11.18">
    <property type="organism ID" value="1749"/>
</dbReference>
<dbReference type="SABIO-RK" id="P29294"/>
<dbReference type="Proteomes" id="UP000001811">
    <property type="component" value="Unplaced"/>
</dbReference>
<dbReference type="GO" id="GO:0032154">
    <property type="term" value="C:cleavage furrow"/>
    <property type="evidence" value="ECO:0007669"/>
    <property type="project" value="UniProtKB-SubCell"/>
</dbReference>
<dbReference type="GO" id="GO:0005737">
    <property type="term" value="C:cytoplasm"/>
    <property type="evidence" value="ECO:0007669"/>
    <property type="project" value="UniProtKB-SubCell"/>
</dbReference>
<dbReference type="GO" id="GO:0030027">
    <property type="term" value="C:lamellipodium"/>
    <property type="evidence" value="ECO:0007669"/>
    <property type="project" value="UniProtKB-SubCell"/>
</dbReference>
<dbReference type="GO" id="GO:0001725">
    <property type="term" value="C:stress fiber"/>
    <property type="evidence" value="ECO:0007669"/>
    <property type="project" value="UniProtKB-SubCell"/>
</dbReference>
<dbReference type="GO" id="GO:0003779">
    <property type="term" value="F:actin binding"/>
    <property type="evidence" value="ECO:0007669"/>
    <property type="project" value="UniProtKB-KW"/>
</dbReference>
<dbReference type="GO" id="GO:0005524">
    <property type="term" value="F:ATP binding"/>
    <property type="evidence" value="ECO:0007669"/>
    <property type="project" value="UniProtKB-KW"/>
</dbReference>
<dbReference type="GO" id="GO:0005516">
    <property type="term" value="F:calmodulin binding"/>
    <property type="evidence" value="ECO:0007669"/>
    <property type="project" value="UniProtKB-KW"/>
</dbReference>
<dbReference type="GO" id="GO:0046872">
    <property type="term" value="F:metal ion binding"/>
    <property type="evidence" value="ECO:0007669"/>
    <property type="project" value="UniProtKB-KW"/>
</dbReference>
<dbReference type="GO" id="GO:0004687">
    <property type="term" value="F:myosin light chain kinase activity"/>
    <property type="evidence" value="ECO:0007669"/>
    <property type="project" value="UniProtKB-EC"/>
</dbReference>
<dbReference type="GO" id="GO:0014820">
    <property type="term" value="P:tonic smooth muscle contraction"/>
    <property type="evidence" value="ECO:0007669"/>
    <property type="project" value="TreeGrafter"/>
</dbReference>
<dbReference type="CDD" id="cd00063">
    <property type="entry name" value="FN3"/>
    <property type="match status" value="1"/>
</dbReference>
<dbReference type="CDD" id="cd20973">
    <property type="entry name" value="IgI_telokin-like"/>
    <property type="match status" value="1"/>
</dbReference>
<dbReference type="CDD" id="cd14191">
    <property type="entry name" value="STKc_MLCK1"/>
    <property type="match status" value="1"/>
</dbReference>
<dbReference type="FunFam" id="1.10.510.10:FF:000175">
    <property type="entry name" value="Myosin light chain kinase, smooth muscle"/>
    <property type="match status" value="1"/>
</dbReference>
<dbReference type="FunFam" id="2.60.40.10:FF:000080">
    <property type="entry name" value="Myosin light chain kinase, smooth muscle"/>
    <property type="match status" value="1"/>
</dbReference>
<dbReference type="FunFam" id="2.60.40.10:FF:000297">
    <property type="entry name" value="Myosin light chain kinase, smooth muscle"/>
    <property type="match status" value="1"/>
</dbReference>
<dbReference type="FunFam" id="2.60.40.10:FF:000516">
    <property type="entry name" value="Myosin light chain kinase, smooth muscle"/>
    <property type="match status" value="1"/>
</dbReference>
<dbReference type="FunFam" id="2.60.40.10:FF:000580">
    <property type="entry name" value="Myosin light chain kinase, smooth muscle"/>
    <property type="match status" value="1"/>
</dbReference>
<dbReference type="FunFam" id="3.30.200.20:FF:000198">
    <property type="entry name" value="Myosin light chain kinase, smooth muscle"/>
    <property type="match status" value="1"/>
</dbReference>
<dbReference type="Gene3D" id="2.60.40.10">
    <property type="entry name" value="Immunoglobulins"/>
    <property type="match status" value="4"/>
</dbReference>
<dbReference type="Gene3D" id="3.30.200.20">
    <property type="entry name" value="Phosphorylase Kinase, domain 1"/>
    <property type="match status" value="1"/>
</dbReference>
<dbReference type="Gene3D" id="1.10.510.10">
    <property type="entry name" value="Transferase(Phosphotransferase) domain 1"/>
    <property type="match status" value="1"/>
</dbReference>
<dbReference type="InterPro" id="IPR003961">
    <property type="entry name" value="FN3_dom"/>
</dbReference>
<dbReference type="InterPro" id="IPR036116">
    <property type="entry name" value="FN3_sf"/>
</dbReference>
<dbReference type="InterPro" id="IPR007110">
    <property type="entry name" value="Ig-like_dom"/>
</dbReference>
<dbReference type="InterPro" id="IPR036179">
    <property type="entry name" value="Ig-like_dom_sf"/>
</dbReference>
<dbReference type="InterPro" id="IPR013783">
    <property type="entry name" value="Ig-like_fold"/>
</dbReference>
<dbReference type="InterPro" id="IPR013098">
    <property type="entry name" value="Ig_I-set"/>
</dbReference>
<dbReference type="InterPro" id="IPR003599">
    <property type="entry name" value="Ig_sub"/>
</dbReference>
<dbReference type="InterPro" id="IPR003598">
    <property type="entry name" value="Ig_sub2"/>
</dbReference>
<dbReference type="InterPro" id="IPR011009">
    <property type="entry name" value="Kinase-like_dom_sf"/>
</dbReference>
<dbReference type="InterPro" id="IPR015725">
    <property type="entry name" value="MLCK1_kinase_dom"/>
</dbReference>
<dbReference type="InterPro" id="IPR000719">
    <property type="entry name" value="Prot_kinase_dom"/>
</dbReference>
<dbReference type="InterPro" id="IPR017441">
    <property type="entry name" value="Protein_kinase_ATP_BS"/>
</dbReference>
<dbReference type="InterPro" id="IPR008271">
    <property type="entry name" value="Ser/Thr_kinase_AS"/>
</dbReference>
<dbReference type="PANTHER" id="PTHR47633">
    <property type="entry name" value="IMMUNOGLOBULIN"/>
    <property type="match status" value="1"/>
</dbReference>
<dbReference type="PANTHER" id="PTHR47633:SF1">
    <property type="entry name" value="MYOSIN LIGHT CHAIN KINASE, SMOOTH MUSCLE"/>
    <property type="match status" value="1"/>
</dbReference>
<dbReference type="Pfam" id="PF00041">
    <property type="entry name" value="fn3"/>
    <property type="match status" value="1"/>
</dbReference>
<dbReference type="Pfam" id="PF07679">
    <property type="entry name" value="I-set"/>
    <property type="match status" value="3"/>
</dbReference>
<dbReference type="Pfam" id="PF00069">
    <property type="entry name" value="Pkinase"/>
    <property type="match status" value="1"/>
</dbReference>
<dbReference type="SMART" id="SM00060">
    <property type="entry name" value="FN3"/>
    <property type="match status" value="1"/>
</dbReference>
<dbReference type="SMART" id="SM00409">
    <property type="entry name" value="IG"/>
    <property type="match status" value="3"/>
</dbReference>
<dbReference type="SMART" id="SM00408">
    <property type="entry name" value="IGc2"/>
    <property type="match status" value="3"/>
</dbReference>
<dbReference type="SMART" id="SM00220">
    <property type="entry name" value="S_TKc"/>
    <property type="match status" value="1"/>
</dbReference>
<dbReference type="SUPFAM" id="SSF49265">
    <property type="entry name" value="Fibronectin type III"/>
    <property type="match status" value="1"/>
</dbReference>
<dbReference type="SUPFAM" id="SSF48726">
    <property type="entry name" value="Immunoglobulin"/>
    <property type="match status" value="3"/>
</dbReference>
<dbReference type="SUPFAM" id="SSF56112">
    <property type="entry name" value="Protein kinase-like (PK-like)"/>
    <property type="match status" value="1"/>
</dbReference>
<dbReference type="PROSITE" id="PS50853">
    <property type="entry name" value="FN3"/>
    <property type="match status" value="1"/>
</dbReference>
<dbReference type="PROSITE" id="PS50835">
    <property type="entry name" value="IG_LIKE"/>
    <property type="match status" value="3"/>
</dbReference>
<dbReference type="PROSITE" id="PS00107">
    <property type="entry name" value="PROTEIN_KINASE_ATP"/>
    <property type="match status" value="1"/>
</dbReference>
<dbReference type="PROSITE" id="PS50011">
    <property type="entry name" value="PROTEIN_KINASE_DOM"/>
    <property type="match status" value="1"/>
</dbReference>
<dbReference type="PROSITE" id="PS00108">
    <property type="entry name" value="PROTEIN_KINASE_ST"/>
    <property type="match status" value="1"/>
</dbReference>
<gene>
    <name type="primary">MYLK</name>
</gene>
<protein>
    <recommendedName>
        <fullName>Myosin light chain kinase, smooth muscle</fullName>
        <shortName>MLCK</shortName>
        <shortName>smMLCK</shortName>
        <ecNumber>2.7.11.18</ecNumber>
    </recommendedName>
    <alternativeName>
        <fullName>Telokin</fullName>
    </alternativeName>
    <component>
        <recommendedName>
            <fullName>Myosin light chain kinase, smooth muscle, deglutamylated form</fullName>
        </recommendedName>
    </component>
</protein>
<name>MYLK_RABIT</name>
<organism>
    <name type="scientific">Oryctolagus cuniculus</name>
    <name type="common">Rabbit</name>
    <dbReference type="NCBI Taxonomy" id="9986"/>
    <lineage>
        <taxon>Eukaryota</taxon>
        <taxon>Metazoa</taxon>
        <taxon>Chordata</taxon>
        <taxon>Craniata</taxon>
        <taxon>Vertebrata</taxon>
        <taxon>Euteleostomi</taxon>
        <taxon>Mammalia</taxon>
        <taxon>Eutheria</taxon>
        <taxon>Euarchontoglires</taxon>
        <taxon>Glires</taxon>
        <taxon>Lagomorpha</taxon>
        <taxon>Leporidae</taxon>
        <taxon>Oryctolagus</taxon>
    </lineage>
</organism>
<comment type="function">
    <text evidence="1">Calcium/calmodulin-dependent myosin light chain kinase implicated in smooth muscle contraction via phosphorylation of myosin light chains (MLC). Also regulates actin-myosin interaction through a non-kinase activity. Phosphorylates PTK2B/PYK2 and myosin light-chains. Involved in the inflammatory response (e.g. apoptosis, vascular permeability, leukocyte diapedesis), cell motility and morphology, airway hyperreactivity and other activities relevant to asthma. Required for tonic airway smooth muscle contraction that is necessary for physiological and asthmatic airway resistance. Necessary for gastrointestinal motility. Implicated in the regulation of endothelial as well as vascular permeability, probably via the regulation of cytoskeletal rearrangements. In the nervous system it has been shown to control the growth initiation of astrocytic processes in culture and to participate in transmitter release at synapses formed between cultured sympathetic ganglion cells. Critical participant in signaling sequences that result in fibroblast apoptosis. Plays a role in the regulation of epithelial cell survival. Required for epithelial wound healing, especially during actomyosin ring contraction during purse-string wound closure. Mediates RhoA-dependent membrane blebbing. Triggers TRPC5 channel activity in a calcium-dependent signaling, by inducing its subcellular localization at the plasma membrane. Promotes cell migration (including tumor cells) and tumor metastasis. PTK2B/PYK2 activation by phosphorylation mediates ITGB2 activation and is thus essential to trigger neutrophil transmigration during acute lung injury (ALI). May regulate optic nerve head astrocyte migration. Probably involved in mitotic cytoskeletal regulation. Regulates tight junction probably by modulating ZO-1 exchange in the perijunctional actomyosin ring. Mediates burn-induced microvascular barrier injury; triggers endothelial contraction in the development of microvascular hyperpermeability by phosphorylating MLC. Essential for intestinal barrier dysfunction. Mediates Giardia spp.-mediated reduced epithelial barrier function during giardiasis intestinal infection via reorganization of cytoskeletal F-actin and tight junctional ZO-1. Necessary for hypotonicity-induced Ca(2+) entry and subsequent activation of volume-sensitive organic osmolyte/anion channels (VSOAC) in cervical cancer cells (By similarity).</text>
</comment>
<comment type="catalytic activity">
    <reaction>
        <text>L-seryl-[myosin light chain] + ATP = O-phospho-L-seryl-[myosin light chain] + ADP + H(+)</text>
        <dbReference type="Rhea" id="RHEA:22004"/>
        <dbReference type="Rhea" id="RHEA-COMP:13684"/>
        <dbReference type="Rhea" id="RHEA-COMP:13685"/>
        <dbReference type="ChEBI" id="CHEBI:15378"/>
        <dbReference type="ChEBI" id="CHEBI:29999"/>
        <dbReference type="ChEBI" id="CHEBI:30616"/>
        <dbReference type="ChEBI" id="CHEBI:83421"/>
        <dbReference type="ChEBI" id="CHEBI:456216"/>
        <dbReference type="EC" id="2.7.11.18"/>
    </reaction>
</comment>
<comment type="catalytic activity">
    <reaction>
        <text>L-threonyl-[myosin light chain] + ATP = O-phospho-L-threonyl-[myosin light chain] + ADP + H(+)</text>
        <dbReference type="Rhea" id="RHEA:53900"/>
        <dbReference type="Rhea" id="RHEA-COMP:13686"/>
        <dbReference type="Rhea" id="RHEA-COMP:13687"/>
        <dbReference type="ChEBI" id="CHEBI:15378"/>
        <dbReference type="ChEBI" id="CHEBI:30013"/>
        <dbReference type="ChEBI" id="CHEBI:30616"/>
        <dbReference type="ChEBI" id="CHEBI:61977"/>
        <dbReference type="ChEBI" id="CHEBI:456216"/>
        <dbReference type="EC" id="2.7.11.18"/>
    </reaction>
</comment>
<comment type="cofactor">
    <cofactor>
        <name>Mg(2+)</name>
        <dbReference type="ChEBI" id="CHEBI:18420"/>
    </cofactor>
</comment>
<comment type="cofactor">
    <cofactor>
        <name>Ca(2+)</name>
        <dbReference type="ChEBI" id="CHEBI:29108"/>
    </cofactor>
</comment>
<comment type="activity regulation">
    <text>All catalytically active isoforms require binding to calcium and calmodulin for activation.</text>
</comment>
<comment type="biophysicochemical properties">
    <kinetics>
        <KM evidence="9">5.2 uM for MLC (isoform Smooth-muscle at 22 degrees Celsius)</KM>
        <Vmax evidence="9">17.0 umol/min/mg enzyme (isoform Smooth-muscle at 22 degrees Celsius)</Vmax>
    </kinetics>
</comment>
<comment type="subunit">
    <text evidence="1">All isoforms including Telokin bind calmodulin. Interacts with SVIL (By similarity). Interacts with CTTN; this interaction is reduced during thrombin-induced endothelial cell (EC) contraction but is promoted by the barrier-protective agonist sphingosine 1-phosphate (S1P) within lamellipodia. A complex made of ABL1, CTTN and MYLK regulates cortical actin-based cytoskeletal rearrangement critical to sphingosine 1-phosphate (S1P)-mediated endothelial cell (EC) barrier enhancement. Binds to NAA10/ARD1 and PTK2B/PYK2 (By similarity).</text>
</comment>
<comment type="subcellular location">
    <subcellularLocation>
        <location evidence="2">Cytoplasm</location>
    </subcellularLocation>
    <subcellularLocation>
        <location evidence="2">Cell projection</location>
        <location evidence="2">Lamellipodium</location>
    </subcellularLocation>
    <subcellularLocation>
        <location evidence="2">Cleavage furrow</location>
    </subcellularLocation>
    <subcellularLocation>
        <location evidence="2">Cytoplasm</location>
        <location evidence="2">Cytoskeleton</location>
        <location evidence="2">Stress fiber</location>
    </subcellularLocation>
    <text evidence="2">Localized to stress fibers during interphase and to the cleavage furrow during mitosis.</text>
</comment>
<comment type="alternative products">
    <event type="alternative promoter"/>
    <isoform>
        <id>P29294-1</id>
        <name>1</name>
        <name>Smooth-muscle</name>
        <sequence type="displayed"/>
    </isoform>
    <isoform>
        <id>P29294-3</id>
        <name>3</name>
        <name>Telokin</name>
        <sequence type="described" ref="VSP_018849"/>
    </isoform>
</comment>
<comment type="tissue specificity">
    <text evidence="10">Isoform Telokin is found in all smooth muscle tested except the aorta. It is not present in non-muscle tissue.</text>
</comment>
<comment type="PTM">
    <text evidence="1">The C-terminus is deglutamylated by AGTPBP1/CCP1, AGBL1/CCP4 and AGBL4/CCP6, leading to the formation of Myosin light chain kinase, smooth muscle, deglutamylated form. The consequences of C-terminal deglutamylation are unknown (By similarity).</text>
</comment>
<comment type="PTM">
    <text evidence="1">Can probably be down-regulated by phosphorylation. Tyrosine phosphorylation by ABL1 increases kinase activity, reverses MLCK-mediated inhibition of Arp2/3-mediated actin polymerization, and enhances CTTN-binding. Phosphorylation by SRC promotes CTTN binding (By similarity).</text>
</comment>
<comment type="miscellaneous">
    <molecule>Isoform 3</molecule>
    <text evidence="11">Has no catalytic activity.</text>
</comment>
<comment type="similarity">
    <text evidence="11">Belongs to the protein kinase superfamily. CAMK Ser/Thr protein kinase family.</text>
</comment>
<feature type="chain" id="PRO_0000024357" description="Myosin light chain kinase, smooth muscle">
    <location>
        <begin position="1"/>
        <end position="1147"/>
    </location>
</feature>
<feature type="chain" id="PRO_0000403733" description="Myosin light chain kinase, smooth muscle, deglutamylated form" evidence="1">
    <location>
        <begin position="1"/>
        <end position="1142"/>
    </location>
</feature>
<feature type="repeat" description="1">
    <location>
        <begin position="100"/>
        <end position="111"/>
    </location>
</feature>
<feature type="repeat" description="2">
    <location>
        <begin position="112"/>
        <end position="123"/>
    </location>
</feature>
<feature type="repeat" description="3; truncated">
    <location>
        <begin position="124"/>
        <end position="132"/>
    </location>
</feature>
<feature type="repeat" description="4">
    <location>
        <begin position="133"/>
        <end position="144"/>
    </location>
</feature>
<feature type="repeat" description="5">
    <location>
        <begin position="145"/>
        <end position="156"/>
    </location>
</feature>
<feature type="repeat" description="6">
    <location>
        <begin position="157"/>
        <end position="168"/>
    </location>
</feature>
<feature type="repeat" description="7">
    <location>
        <begin position="169"/>
        <end position="180"/>
    </location>
</feature>
<feature type="repeat" description="8">
    <location>
        <begin position="181"/>
        <end position="192"/>
    </location>
</feature>
<feature type="repeat" description="9">
    <location>
        <begin position="193"/>
        <end position="204"/>
    </location>
</feature>
<feature type="repeat" description="10">
    <location>
        <begin position="205"/>
        <end position="216"/>
    </location>
</feature>
<feature type="repeat" description="11">
    <location>
        <begin position="217"/>
        <end position="228"/>
    </location>
</feature>
<feature type="repeat" description="12">
    <location>
        <begin position="229"/>
        <end position="240"/>
    </location>
</feature>
<feature type="repeat" description="13">
    <location>
        <begin position="241"/>
        <end position="252"/>
    </location>
</feature>
<feature type="repeat" description="14">
    <location>
        <begin position="253"/>
        <end position="264"/>
    </location>
</feature>
<feature type="repeat" description="15">
    <location>
        <begin position="265"/>
        <end position="276"/>
    </location>
</feature>
<feature type="repeat" description="16">
    <location>
        <begin position="277"/>
        <end position="288"/>
    </location>
</feature>
<feature type="domain" description="Ig-like C2-type 1">
    <location>
        <begin position="329"/>
        <end position="417"/>
    </location>
</feature>
<feature type="domain" description="Ig-like C2-type 2">
    <location>
        <begin position="469"/>
        <end position="557"/>
    </location>
</feature>
<feature type="domain" description="Fibronectin type-III" evidence="6">
    <location>
        <begin position="565"/>
        <end position="657"/>
    </location>
</feature>
<feature type="domain" description="Protein kinase" evidence="5">
    <location>
        <begin position="696"/>
        <end position="951"/>
    </location>
</feature>
<feature type="domain" description="Ig-like C2-type 3">
    <location>
        <begin position="1041"/>
        <end position="1130"/>
    </location>
</feature>
<feature type="region of interest" description="Disordered" evidence="8">
    <location>
        <begin position="1"/>
        <end position="330"/>
    </location>
</feature>
<feature type="region of interest" description="Actin-binding" evidence="1">
    <location>
        <begin position="1"/>
        <end position="41"/>
    </location>
</feature>
<feature type="region of interest" description="Calmodulin-binding" evidence="1">
    <location>
        <begin position="26"/>
        <end position="41"/>
    </location>
</feature>
<feature type="region of interest" description="16 X 12 AA tandem repeats">
    <location>
        <begin position="100"/>
        <end position="288"/>
    </location>
</feature>
<feature type="region of interest" description="Actin-binding (calcium/calmodulin-insensitive)" evidence="1">
    <location>
        <begin position="292"/>
        <end position="692"/>
    </location>
</feature>
<feature type="region of interest" description="Disordered" evidence="8">
    <location>
        <begin position="424"/>
        <end position="476"/>
    </location>
</feature>
<feature type="region of interest" description="Disordered" evidence="8">
    <location>
        <begin position="644"/>
        <end position="678"/>
    </location>
</feature>
<feature type="region of interest" description="Calmodulin-binding">
    <location>
        <begin position="943"/>
        <end position="1006"/>
    </location>
</feature>
<feature type="region of interest" description="Disordered" evidence="8">
    <location>
        <begin position="999"/>
        <end position="1019"/>
    </location>
</feature>
<feature type="compositionally biased region" description="Pro residues" evidence="8">
    <location>
        <begin position="43"/>
        <end position="55"/>
    </location>
</feature>
<feature type="compositionally biased region" description="Basic and acidic residues" evidence="8">
    <location>
        <begin position="293"/>
        <end position="320"/>
    </location>
</feature>
<feature type="compositionally biased region" description="Pro residues" evidence="8">
    <location>
        <begin position="459"/>
        <end position="472"/>
    </location>
</feature>
<feature type="compositionally biased region" description="Polar residues" evidence="8">
    <location>
        <begin position="644"/>
        <end position="653"/>
    </location>
</feature>
<feature type="compositionally biased region" description="Acidic residues" evidence="8">
    <location>
        <begin position="662"/>
        <end position="677"/>
    </location>
</feature>
<feature type="compositionally biased region" description="Polar residues" evidence="8">
    <location>
        <begin position="1002"/>
        <end position="1013"/>
    </location>
</feature>
<feature type="active site" description="Proton acceptor" evidence="5 7">
    <location>
        <position position="817"/>
    </location>
</feature>
<feature type="binding site" evidence="5">
    <location>
        <begin position="702"/>
        <end position="710"/>
    </location>
    <ligand>
        <name>ATP</name>
        <dbReference type="ChEBI" id="CHEBI:30616"/>
    </ligand>
</feature>
<feature type="binding site" evidence="5">
    <location>
        <position position="725"/>
    </location>
    <ligand>
        <name>ATP</name>
        <dbReference type="ChEBI" id="CHEBI:30616"/>
    </ligand>
</feature>
<feature type="modified residue" description="Phosphoserine" evidence="2">
    <location>
        <position position="670"/>
    </location>
</feature>
<feature type="modified residue" description="Phosphotyrosine; by ABL1" evidence="2">
    <location>
        <position position="681"/>
    </location>
</feature>
<feature type="modified residue" description="Phosphotyrosine; by ABL1" evidence="2">
    <location>
        <position position="807"/>
    </location>
</feature>
<feature type="modified residue" description="Phosphotyrosine; by ABL1" evidence="2">
    <location>
        <position position="867"/>
    </location>
</feature>
<feature type="modified residue" description="Phosphoserine" evidence="3">
    <location>
        <position position="991"/>
    </location>
</feature>
<feature type="modified residue" description="Phosphoserine" evidence="3">
    <location>
        <position position="992"/>
    </location>
</feature>
<feature type="modified residue" description="Phosphoserine" evidence="2">
    <location>
        <position position="1004"/>
    </location>
</feature>
<feature type="modified residue" description="Phosphoserine" evidence="3">
    <location>
        <position position="1005"/>
    </location>
</feature>
<feature type="modified residue" description="Phosphoserine" evidence="2">
    <location>
        <position position="1008"/>
    </location>
</feature>
<feature type="modified residue" description="Phosphothreonine" evidence="3">
    <location>
        <position position="1010"/>
    </location>
</feature>
<feature type="modified residue" description="Phosphoserine" evidence="2">
    <location>
        <position position="1011"/>
    </location>
</feature>
<feature type="disulfide bond" evidence="4">
    <location>
        <begin position="350"/>
        <end position="401"/>
    </location>
</feature>
<feature type="disulfide bond" evidence="4">
    <location>
        <begin position="1062"/>
        <end position="1114"/>
    </location>
</feature>
<feature type="splice variant" id="VSP_018849" description="In isoform 3." evidence="11">
    <location>
        <begin position="1"/>
        <end position="992"/>
    </location>
</feature>
<feature type="sequence conflict" description="In Ref. 3; AAA31409." evidence="11" ref="3">
    <original>C</original>
    <variation>R</variation>
    <location>
        <position position="1114"/>
    </location>
</feature>
<evidence type="ECO:0000250" key="1"/>
<evidence type="ECO:0000250" key="2">
    <source>
        <dbReference type="UniProtKB" id="Q15746"/>
    </source>
</evidence>
<evidence type="ECO:0000250" key="3">
    <source>
        <dbReference type="UniProtKB" id="Q6PDN3"/>
    </source>
</evidence>
<evidence type="ECO:0000255" key="4">
    <source>
        <dbReference type="PROSITE-ProRule" id="PRU00114"/>
    </source>
</evidence>
<evidence type="ECO:0000255" key="5">
    <source>
        <dbReference type="PROSITE-ProRule" id="PRU00159"/>
    </source>
</evidence>
<evidence type="ECO:0000255" key="6">
    <source>
        <dbReference type="PROSITE-ProRule" id="PRU00316"/>
    </source>
</evidence>
<evidence type="ECO:0000255" key="7">
    <source>
        <dbReference type="PROSITE-ProRule" id="PRU10027"/>
    </source>
</evidence>
<evidence type="ECO:0000256" key="8">
    <source>
        <dbReference type="SAM" id="MobiDB-lite"/>
    </source>
</evidence>
<evidence type="ECO:0000269" key="9">
    <source>
    </source>
</evidence>
<evidence type="ECO:0000269" key="10">
    <source>
    </source>
</evidence>
<evidence type="ECO:0000305" key="11"/>